<reference key="1">
    <citation type="submission" date="2006-08" db="EMBL/GenBank/DDBJ databases">
        <title>Complete sequence of Shewanella frigidimarina NCIMB 400.</title>
        <authorList>
            <consortium name="US DOE Joint Genome Institute"/>
            <person name="Copeland A."/>
            <person name="Lucas S."/>
            <person name="Lapidus A."/>
            <person name="Barry K."/>
            <person name="Detter J.C."/>
            <person name="Glavina del Rio T."/>
            <person name="Hammon N."/>
            <person name="Israni S."/>
            <person name="Dalin E."/>
            <person name="Tice H."/>
            <person name="Pitluck S."/>
            <person name="Fredrickson J.K."/>
            <person name="Kolker E."/>
            <person name="McCuel L.A."/>
            <person name="DiChristina T."/>
            <person name="Nealson K.H."/>
            <person name="Newman D."/>
            <person name="Tiedje J.M."/>
            <person name="Zhou J."/>
            <person name="Romine M.F."/>
            <person name="Culley D.E."/>
            <person name="Serres M."/>
            <person name="Chertkov O."/>
            <person name="Brettin T."/>
            <person name="Bruce D."/>
            <person name="Han C."/>
            <person name="Tapia R."/>
            <person name="Gilna P."/>
            <person name="Schmutz J."/>
            <person name="Larimer F."/>
            <person name="Land M."/>
            <person name="Hauser L."/>
            <person name="Kyrpides N."/>
            <person name="Mikhailova N."/>
            <person name="Richardson P."/>
        </authorList>
    </citation>
    <scope>NUCLEOTIDE SEQUENCE [LARGE SCALE GENOMIC DNA]</scope>
    <source>
        <strain>NCIMB 400</strain>
    </source>
</reference>
<dbReference type="EC" id="5.1.1.7" evidence="1"/>
<dbReference type="EMBL" id="CP000447">
    <property type="protein sequence ID" value="ABI70307.1"/>
    <property type="molecule type" value="Genomic_DNA"/>
</dbReference>
<dbReference type="RefSeq" id="WP_011635934.1">
    <property type="nucleotide sequence ID" value="NC_008345.1"/>
</dbReference>
<dbReference type="SMR" id="Q088K8"/>
<dbReference type="STRING" id="318167.Sfri_0445"/>
<dbReference type="KEGG" id="sfr:Sfri_0445"/>
<dbReference type="eggNOG" id="COG0253">
    <property type="taxonomic scope" value="Bacteria"/>
</dbReference>
<dbReference type="HOGENOM" id="CLU_053306_1_1_6"/>
<dbReference type="OrthoDB" id="9805408at2"/>
<dbReference type="UniPathway" id="UPA00034">
    <property type="reaction ID" value="UER00025"/>
</dbReference>
<dbReference type="Proteomes" id="UP000000684">
    <property type="component" value="Chromosome"/>
</dbReference>
<dbReference type="GO" id="GO:0005829">
    <property type="term" value="C:cytosol"/>
    <property type="evidence" value="ECO:0007669"/>
    <property type="project" value="TreeGrafter"/>
</dbReference>
<dbReference type="GO" id="GO:0008837">
    <property type="term" value="F:diaminopimelate epimerase activity"/>
    <property type="evidence" value="ECO:0007669"/>
    <property type="project" value="UniProtKB-UniRule"/>
</dbReference>
<dbReference type="GO" id="GO:0009089">
    <property type="term" value="P:lysine biosynthetic process via diaminopimelate"/>
    <property type="evidence" value="ECO:0007669"/>
    <property type="project" value="UniProtKB-UniRule"/>
</dbReference>
<dbReference type="FunFam" id="3.10.310.10:FF:000001">
    <property type="entry name" value="Diaminopimelate epimerase"/>
    <property type="match status" value="1"/>
</dbReference>
<dbReference type="FunFam" id="3.10.310.10:FF:000002">
    <property type="entry name" value="Diaminopimelate epimerase"/>
    <property type="match status" value="1"/>
</dbReference>
<dbReference type="Gene3D" id="3.10.310.10">
    <property type="entry name" value="Diaminopimelate Epimerase, Chain A, domain 1"/>
    <property type="match status" value="2"/>
</dbReference>
<dbReference type="HAMAP" id="MF_00197">
    <property type="entry name" value="DAP_epimerase"/>
    <property type="match status" value="1"/>
</dbReference>
<dbReference type="InterPro" id="IPR018510">
    <property type="entry name" value="DAP_epimerase_AS"/>
</dbReference>
<dbReference type="InterPro" id="IPR001653">
    <property type="entry name" value="DAP_epimerase_DapF"/>
</dbReference>
<dbReference type="NCBIfam" id="TIGR00652">
    <property type="entry name" value="DapF"/>
    <property type="match status" value="1"/>
</dbReference>
<dbReference type="PANTHER" id="PTHR31689:SF0">
    <property type="entry name" value="DIAMINOPIMELATE EPIMERASE"/>
    <property type="match status" value="1"/>
</dbReference>
<dbReference type="PANTHER" id="PTHR31689">
    <property type="entry name" value="DIAMINOPIMELATE EPIMERASE, CHLOROPLASTIC"/>
    <property type="match status" value="1"/>
</dbReference>
<dbReference type="Pfam" id="PF01678">
    <property type="entry name" value="DAP_epimerase"/>
    <property type="match status" value="2"/>
</dbReference>
<dbReference type="SUPFAM" id="SSF54506">
    <property type="entry name" value="Diaminopimelate epimerase-like"/>
    <property type="match status" value="1"/>
</dbReference>
<dbReference type="PROSITE" id="PS01326">
    <property type="entry name" value="DAP_EPIMERASE"/>
    <property type="match status" value="1"/>
</dbReference>
<sequence length="275" mass="30448">MIHFTKMHGLGNDFMVVDGVTQNVFFSPEQIRRLADRNFGIGFDQLLLVEPPYDPDLDFHYRIFNADGSEVEQCGNGARCFARFVRNKGLTQKNKIRVSTNSGKITLRIERDGNVTVNMGVPVIEPSQIPFKAKKSEKTYLLQTPMQTYLCGAISMGNPHCVIQVEDVQTVNVDEIGSSLTRHERFPKGVNVGFMQVINPGHIKLRVYERGAAETLACGTGACAAAAVGQLQDKLDKQVRVDLPGGSLIINWEGEGKPLWMTGPAEHVYDGQIQL</sequence>
<gene>
    <name evidence="1" type="primary">dapF</name>
    <name type="ordered locus">Sfri_0445</name>
</gene>
<keyword id="KW-0028">Amino-acid biosynthesis</keyword>
<keyword id="KW-0963">Cytoplasm</keyword>
<keyword id="KW-0413">Isomerase</keyword>
<keyword id="KW-0457">Lysine biosynthesis</keyword>
<keyword id="KW-1185">Reference proteome</keyword>
<accession>Q088K8</accession>
<name>DAPF_SHEFN</name>
<organism>
    <name type="scientific">Shewanella frigidimarina (strain NCIMB 400)</name>
    <dbReference type="NCBI Taxonomy" id="318167"/>
    <lineage>
        <taxon>Bacteria</taxon>
        <taxon>Pseudomonadati</taxon>
        <taxon>Pseudomonadota</taxon>
        <taxon>Gammaproteobacteria</taxon>
        <taxon>Alteromonadales</taxon>
        <taxon>Shewanellaceae</taxon>
        <taxon>Shewanella</taxon>
    </lineage>
</organism>
<evidence type="ECO:0000255" key="1">
    <source>
        <dbReference type="HAMAP-Rule" id="MF_00197"/>
    </source>
</evidence>
<proteinExistence type="inferred from homology"/>
<comment type="function">
    <text evidence="1">Catalyzes the stereoinversion of LL-2,6-diaminopimelate (L,L-DAP) to meso-diaminopimelate (meso-DAP), a precursor of L-lysine and an essential component of the bacterial peptidoglycan.</text>
</comment>
<comment type="catalytic activity">
    <reaction evidence="1">
        <text>(2S,6S)-2,6-diaminopimelate = meso-2,6-diaminopimelate</text>
        <dbReference type="Rhea" id="RHEA:15393"/>
        <dbReference type="ChEBI" id="CHEBI:57609"/>
        <dbReference type="ChEBI" id="CHEBI:57791"/>
        <dbReference type="EC" id="5.1.1.7"/>
    </reaction>
</comment>
<comment type="pathway">
    <text evidence="1">Amino-acid biosynthesis; L-lysine biosynthesis via DAP pathway; DL-2,6-diaminopimelate from LL-2,6-diaminopimelate: step 1/1.</text>
</comment>
<comment type="subunit">
    <text evidence="1">Homodimer.</text>
</comment>
<comment type="subcellular location">
    <subcellularLocation>
        <location evidence="1">Cytoplasm</location>
    </subcellularLocation>
</comment>
<comment type="similarity">
    <text evidence="1">Belongs to the diaminopimelate epimerase family.</text>
</comment>
<feature type="chain" id="PRO_1000011963" description="Diaminopimelate epimerase">
    <location>
        <begin position="1"/>
        <end position="275"/>
    </location>
</feature>
<feature type="active site" description="Proton donor" evidence="1">
    <location>
        <position position="74"/>
    </location>
</feature>
<feature type="active site" description="Proton acceptor" evidence="1">
    <location>
        <position position="218"/>
    </location>
</feature>
<feature type="binding site" evidence="1">
    <location>
        <position position="12"/>
    </location>
    <ligand>
        <name>substrate</name>
    </ligand>
</feature>
<feature type="binding site" evidence="1">
    <location>
        <position position="45"/>
    </location>
    <ligand>
        <name>substrate</name>
    </ligand>
</feature>
<feature type="binding site" evidence="1">
    <location>
        <position position="65"/>
    </location>
    <ligand>
        <name>substrate</name>
    </ligand>
</feature>
<feature type="binding site" evidence="1">
    <location>
        <begin position="75"/>
        <end position="76"/>
    </location>
    <ligand>
        <name>substrate</name>
    </ligand>
</feature>
<feature type="binding site" evidence="1">
    <location>
        <position position="158"/>
    </location>
    <ligand>
        <name>substrate</name>
    </ligand>
</feature>
<feature type="binding site" evidence="1">
    <location>
        <position position="191"/>
    </location>
    <ligand>
        <name>substrate</name>
    </ligand>
</feature>
<feature type="binding site" evidence="1">
    <location>
        <begin position="209"/>
        <end position="210"/>
    </location>
    <ligand>
        <name>substrate</name>
    </ligand>
</feature>
<feature type="binding site" evidence="1">
    <location>
        <begin position="219"/>
        <end position="220"/>
    </location>
    <ligand>
        <name>substrate</name>
    </ligand>
</feature>
<feature type="site" description="Could be important to modulate the pK values of the two catalytic cysteine residues" evidence="1">
    <location>
        <position position="160"/>
    </location>
</feature>
<feature type="site" description="Could be important to modulate the pK values of the two catalytic cysteine residues" evidence="1">
    <location>
        <position position="209"/>
    </location>
</feature>
<feature type="site" description="Important for dimerization" evidence="1">
    <location>
        <position position="269"/>
    </location>
</feature>
<protein>
    <recommendedName>
        <fullName evidence="1">Diaminopimelate epimerase</fullName>
        <shortName evidence="1">DAP epimerase</shortName>
        <ecNumber evidence="1">5.1.1.7</ecNumber>
    </recommendedName>
    <alternativeName>
        <fullName evidence="1">PLP-independent amino acid racemase</fullName>
    </alternativeName>
</protein>